<feature type="chain" id="PRO_0000145789" description="Coenzyme F420:L-glutamate ligase">
    <location>
        <begin position="1"/>
        <end position="249"/>
    </location>
</feature>
<feature type="binding site" evidence="1">
    <location>
        <begin position="15"/>
        <end position="18"/>
    </location>
    <ligand>
        <name>GTP</name>
        <dbReference type="ChEBI" id="CHEBI:37565"/>
    </ligand>
</feature>
<feature type="binding site" evidence="1">
    <location>
        <begin position="45"/>
        <end position="46"/>
    </location>
    <ligand>
        <name>GTP</name>
        <dbReference type="ChEBI" id="CHEBI:37565"/>
    </ligand>
</feature>
<feature type="binding site" evidence="1">
    <location>
        <position position="50"/>
    </location>
    <ligand>
        <name>GTP</name>
        <dbReference type="ChEBI" id="CHEBI:37565"/>
    </ligand>
</feature>
<feature type="binding site" evidence="1">
    <location>
        <position position="115"/>
    </location>
    <ligand>
        <name>a divalent metal cation</name>
        <dbReference type="ChEBI" id="CHEBI:60240"/>
        <label>1</label>
    </ligand>
</feature>
<feature type="binding site" evidence="1">
    <location>
        <position position="118"/>
    </location>
    <ligand>
        <name>GTP</name>
        <dbReference type="ChEBI" id="CHEBI:37565"/>
    </ligand>
</feature>
<feature type="binding site" evidence="1">
    <location>
        <position position="155"/>
    </location>
    <ligand>
        <name>a divalent metal cation</name>
        <dbReference type="ChEBI" id="CHEBI:60240"/>
        <label>1</label>
    </ligand>
</feature>
<feature type="binding site" evidence="1">
    <location>
        <position position="156"/>
    </location>
    <ligand>
        <name>a divalent metal cation</name>
        <dbReference type="ChEBI" id="CHEBI:60240"/>
        <label>2</label>
    </ligand>
</feature>
<feature type="binding site" evidence="1">
    <location>
        <begin position="211"/>
        <end position="218"/>
    </location>
    <ligand>
        <name>GTP</name>
        <dbReference type="ChEBI" id="CHEBI:37565"/>
    </ligand>
</feature>
<feature type="binding site" evidence="1">
    <location>
        <position position="213"/>
    </location>
    <ligand>
        <name>a divalent metal cation</name>
        <dbReference type="ChEBI" id="CHEBI:60240"/>
        <label>2</label>
    </ligand>
</feature>
<evidence type="ECO:0000250" key="1"/>
<evidence type="ECO:0000269" key="2">
    <source>
    </source>
</evidence>
<evidence type="ECO:0000305" key="3"/>
<dbReference type="EC" id="6.3.2.31"/>
<dbReference type="EC" id="6.3.2.34"/>
<dbReference type="EMBL" id="L77117">
    <property type="protein sequence ID" value="AAB98763.1"/>
    <property type="molecule type" value="Genomic_DNA"/>
</dbReference>
<dbReference type="PIR" id="H64395">
    <property type="entry name" value="H64395"/>
</dbReference>
<dbReference type="RefSeq" id="WP_010870273.1">
    <property type="nucleotide sequence ID" value="NC_000909.1"/>
</dbReference>
<dbReference type="SMR" id="Q58178"/>
<dbReference type="FunCoup" id="Q58178">
    <property type="interactions" value="110"/>
</dbReference>
<dbReference type="STRING" id="243232.MJ_0768"/>
<dbReference type="PaxDb" id="243232-MJ_0768"/>
<dbReference type="EnsemblBacteria" id="AAB98763">
    <property type="protein sequence ID" value="AAB98763"/>
    <property type="gene ID" value="MJ_0768"/>
</dbReference>
<dbReference type="GeneID" id="1451645"/>
<dbReference type="KEGG" id="mja:MJ_0768"/>
<dbReference type="eggNOG" id="arCOG02714">
    <property type="taxonomic scope" value="Archaea"/>
</dbReference>
<dbReference type="HOGENOM" id="CLU_051152_1_1_2"/>
<dbReference type="InParanoid" id="Q58178"/>
<dbReference type="OrthoDB" id="11383at2157"/>
<dbReference type="PhylomeDB" id="Q58178"/>
<dbReference type="BioCyc" id="MetaCyc:MONOMER-12187"/>
<dbReference type="BRENDA" id="6.3.2.31">
    <property type="organism ID" value="3260"/>
</dbReference>
<dbReference type="BRENDA" id="6.3.2.34">
    <property type="organism ID" value="3260"/>
</dbReference>
<dbReference type="SABIO-RK" id="Q58178"/>
<dbReference type="UniPathway" id="UPA00071"/>
<dbReference type="Proteomes" id="UP000000805">
    <property type="component" value="Chromosome"/>
</dbReference>
<dbReference type="GO" id="GO:0052618">
    <property type="term" value="F:coenzyme F420-0:L-glutamate ligase activity"/>
    <property type="evidence" value="ECO:0000314"/>
    <property type="project" value="MENGO"/>
</dbReference>
<dbReference type="GO" id="GO:0052619">
    <property type="term" value="F:coenzyme F420-1:gamma-L-glutamate ligase activity"/>
    <property type="evidence" value="ECO:0007669"/>
    <property type="project" value="UniProtKB-UniRule"/>
</dbReference>
<dbReference type="GO" id="GO:0005525">
    <property type="term" value="F:GTP binding"/>
    <property type="evidence" value="ECO:0007669"/>
    <property type="project" value="UniProtKB-KW"/>
</dbReference>
<dbReference type="GO" id="GO:0046872">
    <property type="term" value="F:metal ion binding"/>
    <property type="evidence" value="ECO:0007669"/>
    <property type="project" value="UniProtKB-KW"/>
</dbReference>
<dbReference type="GO" id="GO:0052645">
    <property type="term" value="P:F420-0 metabolic process"/>
    <property type="evidence" value="ECO:0007669"/>
    <property type="project" value="UniProtKB-UniRule"/>
</dbReference>
<dbReference type="Gene3D" id="3.30.1330.100">
    <property type="entry name" value="CofE-like"/>
    <property type="match status" value="1"/>
</dbReference>
<dbReference type="Gene3D" id="3.90.1660.10">
    <property type="entry name" value="CofE-like domain"/>
    <property type="match status" value="1"/>
</dbReference>
<dbReference type="HAMAP" id="MF_01258">
    <property type="entry name" value="F420_ligase_CofE"/>
    <property type="match status" value="1"/>
</dbReference>
<dbReference type="InterPro" id="IPR008225">
    <property type="entry name" value="F420-0_g-glutamyl_ligase"/>
</dbReference>
<dbReference type="InterPro" id="IPR002847">
    <property type="entry name" value="F420-0_gamma-glut_ligase-dom"/>
</dbReference>
<dbReference type="InterPro" id="IPR023659">
    <property type="entry name" value="F420_ligase_CofE_arc"/>
</dbReference>
<dbReference type="NCBIfam" id="TIGR01916">
    <property type="entry name" value="F420_cofE"/>
    <property type="match status" value="1"/>
</dbReference>
<dbReference type="NCBIfam" id="NF009809">
    <property type="entry name" value="PRK13293.1"/>
    <property type="match status" value="1"/>
</dbReference>
<dbReference type="PANTHER" id="PTHR47917">
    <property type="match status" value="1"/>
</dbReference>
<dbReference type="PANTHER" id="PTHR47917:SF1">
    <property type="entry name" value="COENZYME F420:L-GLUTAMATE LIGASE"/>
    <property type="match status" value="1"/>
</dbReference>
<dbReference type="Pfam" id="PF01996">
    <property type="entry name" value="F420_ligase"/>
    <property type="match status" value="1"/>
</dbReference>
<dbReference type="SUPFAM" id="SSF144010">
    <property type="entry name" value="CofE-like"/>
    <property type="match status" value="1"/>
</dbReference>
<protein>
    <recommendedName>
        <fullName>Coenzyme F420:L-glutamate ligase</fullName>
        <ecNumber>6.3.2.31</ecNumber>
        <ecNumber>6.3.2.34</ecNumber>
    </recommendedName>
    <alternativeName>
        <fullName>Coenzyme F420-0:L-glutamate ligase</fullName>
    </alternativeName>
    <alternativeName>
        <fullName>Coenzyme F420-1:gamma-L-glutamate ligase</fullName>
    </alternativeName>
    <alternativeName>
        <fullName>F420:glutamyl ligase</fullName>
    </alternativeName>
</protein>
<keyword id="KW-0342">GTP-binding</keyword>
<keyword id="KW-0436">Ligase</keyword>
<keyword id="KW-0460">Magnesium</keyword>
<keyword id="KW-0464">Manganese</keyword>
<keyword id="KW-0479">Metal-binding</keyword>
<keyword id="KW-0547">Nucleotide-binding</keyword>
<keyword id="KW-0630">Potassium</keyword>
<keyword id="KW-1185">Reference proteome</keyword>
<gene>
    <name type="primary">cofE</name>
    <name type="ordered locus">MJ0768</name>
</gene>
<comment type="function">
    <text evidence="2">Catalyzes the GTP-dependent successive addition of two L-glutamates to the L-lactyl phosphodiester of 7,8-didemethyl-8-hydroxy-5-deazariboflavin (F420-0) to form coenzyme F420-0-glutamyl-glutamate (F420-2), with a gamma-linkage between the two glutamates. Cannot use F420-2 as substrate to add more glutamates. Exhibits maximum activity with GTP, compared with UTP (66%) and dGTP (25%); with ATP, only F420-1 is observed as the product; CTP and TTP support no activity.</text>
</comment>
<comment type="catalytic activity">
    <reaction evidence="2">
        <text>oxidized coenzyme F420-0 + GTP + L-glutamate = oxidized coenzyme F420-1 + GDP + phosphate + H(+)</text>
        <dbReference type="Rhea" id="RHEA:30555"/>
        <dbReference type="ChEBI" id="CHEBI:15378"/>
        <dbReference type="ChEBI" id="CHEBI:29985"/>
        <dbReference type="ChEBI" id="CHEBI:37565"/>
        <dbReference type="ChEBI" id="CHEBI:43474"/>
        <dbReference type="ChEBI" id="CHEBI:58189"/>
        <dbReference type="ChEBI" id="CHEBI:59907"/>
        <dbReference type="ChEBI" id="CHEBI:59920"/>
        <dbReference type="EC" id="6.3.2.31"/>
    </reaction>
</comment>
<comment type="catalytic activity">
    <reaction evidence="2">
        <text>oxidized coenzyme F420-1 + GTP + L-glutamate = oxidized coenzyme F420-2 + GDP + phosphate + H(+)</text>
        <dbReference type="Rhea" id="RHEA:30523"/>
        <dbReference type="ChEBI" id="CHEBI:15378"/>
        <dbReference type="ChEBI" id="CHEBI:29985"/>
        <dbReference type="ChEBI" id="CHEBI:37565"/>
        <dbReference type="ChEBI" id="CHEBI:43474"/>
        <dbReference type="ChEBI" id="CHEBI:57922"/>
        <dbReference type="ChEBI" id="CHEBI:58189"/>
        <dbReference type="ChEBI" id="CHEBI:59920"/>
        <dbReference type="EC" id="6.3.2.34"/>
    </reaction>
</comment>
<comment type="cofactor">
    <cofactor evidence="2">
        <name>Mg(2+)</name>
        <dbReference type="ChEBI" id="CHEBI:18420"/>
    </cofactor>
    <cofactor evidence="2">
        <name>Mn(2+)</name>
        <dbReference type="ChEBI" id="CHEBI:29035"/>
    </cofactor>
    <text evidence="2">Binds 2 divalent metal cations per subunit. The ions could be magnesium and/or manganese.</text>
</comment>
<comment type="cofactor">
    <cofactor evidence="2">
        <name>K(+)</name>
        <dbReference type="ChEBI" id="CHEBI:29103"/>
    </cofactor>
    <text evidence="2">Monovalent cation. The ion could be potassium.</text>
</comment>
<comment type="biophysicochemical properties">
    <kinetics>
        <KM evidence="2">1 uM for F420-0</KM>
        <KM evidence="2">0.21 uM for F420-1</KM>
        <Vmax evidence="2">2.4 nmol/min/mg enzyme with F420-0 as substrate</Vmax>
        <Vmax evidence="2">0.96 nmol/min/mg enzyme with F420-1 as substrate</Vmax>
    </kinetics>
    <phDependence>
        <text evidence="2">Optimum pH is 8.5.</text>
    </phDependence>
    <temperatureDependence>
        <text evidence="2">Optimum temperature is 60 degrees Celsius. Thermostable. Retains 70% of its activity after heating at 80 degrees Celsius for 15 minutes.</text>
    </temperatureDependence>
</comment>
<comment type="pathway">
    <text>Cofactor biosynthesis; coenzyme F420 biosynthesis.</text>
</comment>
<comment type="subunit">
    <text evidence="2">Homodimer.</text>
</comment>
<comment type="similarity">
    <text evidence="3">Belongs to the CofE family.</text>
</comment>
<sequence>MIKEKRKVEVIGLELPIFKGGEQINLSELIAQYPIEDGDIIVIAETLISKLEGGVIDRDKIIPSKEAIELAKKTGKDPKVVQVILDEAKEIVKVGKNFIITETKHGFVCANSGVDESNIYKGIKILPKNPDESAEKIRKEIEKLTGKRVGVIISDSVGRPFRKGAVGIAIGVSGILALWDRKGEKDLFGRELKTTEVAIADELASMANVVMGEADEGIPVVIIRGANVPFGNGKGRDLIRPKEEDVFRN</sequence>
<accession>Q58178</accession>
<reference key="1">
    <citation type="journal article" date="1996" name="Science">
        <title>Complete genome sequence of the methanogenic archaeon, Methanococcus jannaschii.</title>
        <authorList>
            <person name="Bult C.J."/>
            <person name="White O."/>
            <person name="Olsen G.J."/>
            <person name="Zhou L."/>
            <person name="Fleischmann R.D."/>
            <person name="Sutton G.G."/>
            <person name="Blake J.A."/>
            <person name="FitzGerald L.M."/>
            <person name="Clayton R.A."/>
            <person name="Gocayne J.D."/>
            <person name="Kerlavage A.R."/>
            <person name="Dougherty B.A."/>
            <person name="Tomb J.-F."/>
            <person name="Adams M.D."/>
            <person name="Reich C.I."/>
            <person name="Overbeek R."/>
            <person name="Kirkness E.F."/>
            <person name="Weinstock K.G."/>
            <person name="Merrick J.M."/>
            <person name="Glodek A."/>
            <person name="Scott J.L."/>
            <person name="Geoghagen N.S.M."/>
            <person name="Weidman J.F."/>
            <person name="Fuhrmann J.L."/>
            <person name="Nguyen D."/>
            <person name="Utterback T.R."/>
            <person name="Kelley J.M."/>
            <person name="Peterson J.D."/>
            <person name="Sadow P.W."/>
            <person name="Hanna M.C."/>
            <person name="Cotton M.D."/>
            <person name="Roberts K.M."/>
            <person name="Hurst M.A."/>
            <person name="Kaine B.P."/>
            <person name="Borodovsky M."/>
            <person name="Klenk H.-P."/>
            <person name="Fraser C.M."/>
            <person name="Smith H.O."/>
            <person name="Woese C.R."/>
            <person name="Venter J.C."/>
        </authorList>
    </citation>
    <scope>NUCLEOTIDE SEQUENCE [LARGE SCALE GENOMIC DNA]</scope>
    <source>
        <strain>ATCC 43067 / DSM 2661 / JAL-1 / JCM 10045 / NBRC 100440</strain>
    </source>
</reference>
<reference key="2">
    <citation type="journal article" date="2003" name="Biochemistry">
        <title>CofE catalyzes the addition of two glutamates to F420-0 in F420 coenzyme biosynthesis in Methanococcus jannaschii.</title>
        <authorList>
            <person name="Li H."/>
            <person name="Graupner M."/>
            <person name="Xu H."/>
            <person name="White R.H."/>
        </authorList>
    </citation>
    <scope>FUNCTION</scope>
    <scope>CATALYTIC ACTIVITY</scope>
    <scope>COFACTOR</scope>
    <scope>SUBSTRATE SPECIFICITY</scope>
    <scope>BIOPHYSICOCHEMICAL PROPERTIES</scope>
    <scope>SUBUNIT</scope>
    <scope>REACTION MECHANISM</scope>
    <source>
        <strain>ATCC 43067 / DSM 2661 / JAL-1 / JCM 10045 / NBRC 100440</strain>
    </source>
</reference>
<name>COFE_METJA</name>
<organism>
    <name type="scientific">Methanocaldococcus jannaschii (strain ATCC 43067 / DSM 2661 / JAL-1 / JCM 10045 / NBRC 100440)</name>
    <name type="common">Methanococcus jannaschii</name>
    <dbReference type="NCBI Taxonomy" id="243232"/>
    <lineage>
        <taxon>Archaea</taxon>
        <taxon>Methanobacteriati</taxon>
        <taxon>Methanobacteriota</taxon>
        <taxon>Methanomada group</taxon>
        <taxon>Methanococci</taxon>
        <taxon>Methanococcales</taxon>
        <taxon>Methanocaldococcaceae</taxon>
        <taxon>Methanocaldococcus</taxon>
    </lineage>
</organism>
<proteinExistence type="evidence at protein level"/>